<keyword id="KW-0002">3D-structure</keyword>
<keyword id="KW-0010">Activator</keyword>
<keyword id="KW-0963">Cytoplasm</keyword>
<keyword id="KW-0903">Direct protein sequencing</keyword>
<keyword id="KW-0238">DNA-binding</keyword>
<keyword id="KW-0597">Phosphoprotein</keyword>
<keyword id="KW-1185">Reference proteome</keyword>
<keyword id="KW-0804">Transcription</keyword>
<keyword id="KW-0805">Transcription regulation</keyword>
<keyword id="KW-0902">Two-component regulatory system</keyword>
<accession>P38684</accession>
<accession>P77344</accession>
<proteinExistence type="evidence at protein level"/>
<feature type="chain" id="PRO_0000081255" description="TorCAD operon transcriptional regulatory protein TorR">
    <location>
        <begin position="1"/>
        <end position="230"/>
    </location>
</feature>
<feature type="domain" description="Response regulatory" evidence="1">
    <location>
        <begin position="4"/>
        <end position="117"/>
    </location>
</feature>
<feature type="DNA-binding region" description="OmpR/PhoB-type" evidence="2">
    <location>
        <begin position="132"/>
        <end position="227"/>
    </location>
</feature>
<feature type="modified residue" description="4-aspartylphosphate" evidence="5">
    <location>
        <position position="53"/>
    </location>
</feature>
<feature type="mutagenesis site" description="Loss of phosphorylation." evidence="4">
    <original>D</original>
    <variation>A</variation>
    <location>
        <position position="53"/>
    </location>
</feature>
<feature type="sequence conflict" description="In Ref. 1; CAA63922." evidence="5" ref="1">
    <original>C</original>
    <variation>L</variation>
    <location>
        <position position="134"/>
    </location>
</feature>
<feature type="strand" evidence="6">
    <location>
        <begin position="4"/>
        <end position="8"/>
    </location>
</feature>
<feature type="helix" evidence="6">
    <location>
        <begin position="12"/>
        <end position="24"/>
    </location>
</feature>
<feature type="strand" evidence="6">
    <location>
        <begin position="28"/>
        <end position="34"/>
    </location>
</feature>
<feature type="helix" evidence="6">
    <location>
        <begin position="35"/>
        <end position="44"/>
    </location>
</feature>
<feature type="strand" evidence="6">
    <location>
        <begin position="48"/>
        <end position="54"/>
    </location>
</feature>
<feature type="strand" evidence="6">
    <location>
        <begin position="57"/>
        <end position="59"/>
    </location>
</feature>
<feature type="helix" evidence="6">
    <location>
        <begin position="61"/>
        <end position="69"/>
    </location>
</feature>
<feature type="strand" evidence="6">
    <location>
        <begin position="75"/>
        <end position="82"/>
    </location>
</feature>
<feature type="helix" evidence="6">
    <location>
        <begin position="85"/>
        <end position="94"/>
    </location>
</feature>
<feature type="strand" evidence="6">
    <location>
        <begin position="97"/>
        <end position="103"/>
    </location>
</feature>
<feature type="helix" evidence="6">
    <location>
        <begin position="106"/>
        <end position="120"/>
    </location>
</feature>
<organism>
    <name type="scientific">Escherichia coli (strain K12)</name>
    <dbReference type="NCBI Taxonomy" id="83333"/>
    <lineage>
        <taxon>Bacteria</taxon>
        <taxon>Pseudomonadati</taxon>
        <taxon>Pseudomonadota</taxon>
        <taxon>Gammaproteobacteria</taxon>
        <taxon>Enterobacterales</taxon>
        <taxon>Enterobacteriaceae</taxon>
        <taxon>Escherichia</taxon>
    </lineage>
</organism>
<dbReference type="EMBL" id="X94231">
    <property type="protein sequence ID" value="CAA63922.1"/>
    <property type="molecule type" value="Genomic_DNA"/>
</dbReference>
<dbReference type="EMBL" id="U00096">
    <property type="protein sequence ID" value="AAC74080.1"/>
    <property type="molecule type" value="Genomic_DNA"/>
</dbReference>
<dbReference type="EMBL" id="AP009048">
    <property type="protein sequence ID" value="BAA36137.1"/>
    <property type="molecule type" value="Genomic_DNA"/>
</dbReference>
<dbReference type="PIR" id="A64841">
    <property type="entry name" value="A64841"/>
</dbReference>
<dbReference type="RefSeq" id="NP_415515.1">
    <property type="nucleotide sequence ID" value="NC_000913.3"/>
</dbReference>
<dbReference type="RefSeq" id="WP_001120125.1">
    <property type="nucleotide sequence ID" value="NZ_SSZK01000002.1"/>
</dbReference>
<dbReference type="PDB" id="1ZGZ">
    <property type="method" value="X-ray"/>
    <property type="resolution" value="1.80 A"/>
    <property type="chains" value="A/B/C/D=1-122"/>
</dbReference>
<dbReference type="PDBsum" id="1ZGZ"/>
<dbReference type="SMR" id="P38684"/>
<dbReference type="BioGRID" id="4261488">
    <property type="interactions" value="118"/>
</dbReference>
<dbReference type="BioGRID" id="850542">
    <property type="interactions" value="1"/>
</dbReference>
<dbReference type="DIP" id="DIP-11016N"/>
<dbReference type="FunCoup" id="P38684">
    <property type="interactions" value="291"/>
</dbReference>
<dbReference type="IntAct" id="P38684">
    <property type="interactions" value="4"/>
</dbReference>
<dbReference type="STRING" id="511145.b0995"/>
<dbReference type="iPTMnet" id="P38684"/>
<dbReference type="jPOST" id="P38684"/>
<dbReference type="PaxDb" id="511145-b0995"/>
<dbReference type="EnsemblBacteria" id="AAC74080">
    <property type="protein sequence ID" value="AAC74080"/>
    <property type="gene ID" value="b0995"/>
</dbReference>
<dbReference type="GeneID" id="946182"/>
<dbReference type="KEGG" id="ecj:JW0980"/>
<dbReference type="KEGG" id="eco:b0995"/>
<dbReference type="KEGG" id="ecoc:C3026_06065"/>
<dbReference type="PATRIC" id="fig|1411691.4.peg.1276"/>
<dbReference type="EchoBASE" id="EB2499"/>
<dbReference type="eggNOG" id="COG0745">
    <property type="taxonomic scope" value="Bacteria"/>
</dbReference>
<dbReference type="HOGENOM" id="CLU_000445_30_4_6"/>
<dbReference type="InParanoid" id="P38684"/>
<dbReference type="OMA" id="HTDPFTN"/>
<dbReference type="OrthoDB" id="9802426at2"/>
<dbReference type="PhylomeDB" id="P38684"/>
<dbReference type="BioCyc" id="EcoCyc:TORR-MONOMER"/>
<dbReference type="EvolutionaryTrace" id="P38684"/>
<dbReference type="PRO" id="PR:P38684"/>
<dbReference type="Proteomes" id="UP000000625">
    <property type="component" value="Chromosome"/>
</dbReference>
<dbReference type="GO" id="GO:0005829">
    <property type="term" value="C:cytosol"/>
    <property type="evidence" value="ECO:0000318"/>
    <property type="project" value="GO_Central"/>
</dbReference>
<dbReference type="GO" id="GO:0032993">
    <property type="term" value="C:protein-DNA complex"/>
    <property type="evidence" value="ECO:0000318"/>
    <property type="project" value="GO_Central"/>
</dbReference>
<dbReference type="GO" id="GO:0000156">
    <property type="term" value="F:phosphorelay response regulator activity"/>
    <property type="evidence" value="ECO:0000314"/>
    <property type="project" value="EcoCyc"/>
</dbReference>
<dbReference type="GO" id="GO:0000976">
    <property type="term" value="F:transcription cis-regulatory region binding"/>
    <property type="evidence" value="ECO:0000318"/>
    <property type="project" value="GO_Central"/>
</dbReference>
<dbReference type="GO" id="GO:0006355">
    <property type="term" value="P:regulation of DNA-templated transcription"/>
    <property type="evidence" value="ECO:0000314"/>
    <property type="project" value="EcoCyc"/>
</dbReference>
<dbReference type="CDD" id="cd17619">
    <property type="entry name" value="REC_OmpR_ArcA_TorR-like"/>
    <property type="match status" value="1"/>
</dbReference>
<dbReference type="CDD" id="cd00383">
    <property type="entry name" value="trans_reg_C"/>
    <property type="match status" value="1"/>
</dbReference>
<dbReference type="FunFam" id="3.40.50.2300:FF:000006">
    <property type="entry name" value="Two-component system response regulator ArcA"/>
    <property type="match status" value="1"/>
</dbReference>
<dbReference type="FunFam" id="1.10.10.10:FF:000099">
    <property type="entry name" value="Two-component system response regulator TorR"/>
    <property type="match status" value="1"/>
</dbReference>
<dbReference type="Gene3D" id="3.40.50.2300">
    <property type="match status" value="1"/>
</dbReference>
<dbReference type="Gene3D" id="6.10.250.690">
    <property type="match status" value="1"/>
</dbReference>
<dbReference type="Gene3D" id="1.10.10.10">
    <property type="entry name" value="Winged helix-like DNA-binding domain superfamily/Winged helix DNA-binding domain"/>
    <property type="match status" value="1"/>
</dbReference>
<dbReference type="InterPro" id="IPR011006">
    <property type="entry name" value="CheY-like_superfamily"/>
</dbReference>
<dbReference type="InterPro" id="IPR001867">
    <property type="entry name" value="OmpR/PhoB-type_DNA-bd"/>
</dbReference>
<dbReference type="InterPro" id="IPR001789">
    <property type="entry name" value="Sig_transdc_resp-reg_receiver"/>
</dbReference>
<dbReference type="InterPro" id="IPR039420">
    <property type="entry name" value="WalR-like"/>
</dbReference>
<dbReference type="InterPro" id="IPR036388">
    <property type="entry name" value="WH-like_DNA-bd_sf"/>
</dbReference>
<dbReference type="NCBIfam" id="NF008034">
    <property type="entry name" value="PRK10766.1"/>
    <property type="match status" value="1"/>
</dbReference>
<dbReference type="PANTHER" id="PTHR48111">
    <property type="entry name" value="REGULATOR OF RPOS"/>
    <property type="match status" value="1"/>
</dbReference>
<dbReference type="PANTHER" id="PTHR48111:SF58">
    <property type="entry name" value="TORCAD OPERON TRANSCRIPTIONAL REGULATORY PROTEIN TORR"/>
    <property type="match status" value="1"/>
</dbReference>
<dbReference type="Pfam" id="PF00072">
    <property type="entry name" value="Response_reg"/>
    <property type="match status" value="1"/>
</dbReference>
<dbReference type="Pfam" id="PF00486">
    <property type="entry name" value="Trans_reg_C"/>
    <property type="match status" value="1"/>
</dbReference>
<dbReference type="SMART" id="SM00448">
    <property type="entry name" value="REC"/>
    <property type="match status" value="1"/>
</dbReference>
<dbReference type="SMART" id="SM00862">
    <property type="entry name" value="Trans_reg_C"/>
    <property type="match status" value="1"/>
</dbReference>
<dbReference type="SUPFAM" id="SSF52172">
    <property type="entry name" value="CheY-like"/>
    <property type="match status" value="1"/>
</dbReference>
<dbReference type="PROSITE" id="PS51755">
    <property type="entry name" value="OMPR_PHOB"/>
    <property type="match status" value="1"/>
</dbReference>
<dbReference type="PROSITE" id="PS50110">
    <property type="entry name" value="RESPONSE_REGULATORY"/>
    <property type="match status" value="1"/>
</dbReference>
<comment type="function">
    <text>Member of the two-component regulatory system TorS/TorR involved in the anaerobic utilization of trimethylamine-N-oxide (TMAO). Phosphorylated TorR activates the transcription of the torCAD operon by binding to four decameric boxes located in the torCAD promoter. Box1, 2 and 4 contain the DNA sequence 5'-CTGTTCATAT-3' and box3 contains the DNA sequence 5'-CCGTTCATCC-3'. Phosphorylated as well as unphosphorylated TorR negatively regulates its own expression by binding to box1 and 2.</text>
</comment>
<comment type="subunit">
    <text evidence="3">Interacts with TorI. TorI binds to the effector domain of TorR. This interaction, which does not interfere with TorR DNA binding activity, probably prevents the recruitment of RNA polymerase to the torCAD promoter.</text>
</comment>
<comment type="subcellular location">
    <subcellularLocation>
        <location evidence="5">Cytoplasm</location>
    </subcellularLocation>
</comment>
<comment type="PTM">
    <text>Phosphorylated and dephosphorylated by TorS.</text>
</comment>
<evidence type="ECO:0000255" key="1">
    <source>
        <dbReference type="PROSITE-ProRule" id="PRU00169"/>
    </source>
</evidence>
<evidence type="ECO:0000255" key="2">
    <source>
        <dbReference type="PROSITE-ProRule" id="PRU01091"/>
    </source>
</evidence>
<evidence type="ECO:0000269" key="3">
    <source>
    </source>
</evidence>
<evidence type="ECO:0000269" key="4">
    <source>
    </source>
</evidence>
<evidence type="ECO:0000305" key="5"/>
<evidence type="ECO:0007829" key="6">
    <source>
        <dbReference type="PDB" id="1ZGZ"/>
    </source>
</evidence>
<name>TORR_ECOLI</name>
<reference key="1">
    <citation type="journal article" date="1994" name="J. Bacteriol.">
        <title>The torR gene of Escherichia coli encodes a response regulator protein involved in the expression of the trimethylamine N-oxide reductase genes.</title>
        <authorList>
            <person name="Simon G."/>
            <person name="Mejean V."/>
            <person name="Jourlin C."/>
            <person name="Chippaux M."/>
            <person name="Pascal M.-C."/>
        </authorList>
    </citation>
    <scope>NUCLEOTIDE SEQUENCE [GENOMIC DNA]</scope>
    <scope>PROTEIN SEQUENCE OF 1-7</scope>
    <source>
        <strain>K12 / MC4100 / ATCC 35695 / DSM 6574</strain>
    </source>
</reference>
<reference key="2">
    <citation type="journal article" date="1995" name="J. Bacteriol.">
        <authorList>
            <person name="Simon G."/>
            <person name="Mejean V."/>
            <person name="Jourlin C."/>
            <person name="Chippaux M."/>
            <person name="Pascal M.-C."/>
        </authorList>
    </citation>
    <scope>ERRATUM OF PUBMED:8083154</scope>
</reference>
<reference key="3">
    <citation type="journal article" date="1996" name="DNA Res.">
        <title>A 718-kb DNA sequence of the Escherichia coli K-12 genome corresponding to the 12.7-28.0 min region on the linkage map.</title>
        <authorList>
            <person name="Oshima T."/>
            <person name="Aiba H."/>
            <person name="Baba T."/>
            <person name="Fujita K."/>
            <person name="Hayashi K."/>
            <person name="Honjo A."/>
            <person name="Ikemoto K."/>
            <person name="Inada T."/>
            <person name="Itoh T."/>
            <person name="Kajihara M."/>
            <person name="Kanai K."/>
            <person name="Kashimoto K."/>
            <person name="Kimura S."/>
            <person name="Kitagawa M."/>
            <person name="Makino K."/>
            <person name="Masuda S."/>
            <person name="Miki T."/>
            <person name="Mizobuchi K."/>
            <person name="Mori H."/>
            <person name="Motomura K."/>
            <person name="Nakamura Y."/>
            <person name="Nashimoto H."/>
            <person name="Nishio Y."/>
            <person name="Saito N."/>
            <person name="Sampei G."/>
            <person name="Seki Y."/>
            <person name="Tagami H."/>
            <person name="Takemoto K."/>
            <person name="Wada C."/>
            <person name="Yamamoto Y."/>
            <person name="Yano M."/>
            <person name="Horiuchi T."/>
        </authorList>
    </citation>
    <scope>NUCLEOTIDE SEQUENCE [LARGE SCALE GENOMIC DNA]</scope>
    <source>
        <strain>K12 / W3110 / ATCC 27325 / DSM 5911</strain>
    </source>
</reference>
<reference key="4">
    <citation type="journal article" date="1997" name="Science">
        <title>The complete genome sequence of Escherichia coli K-12.</title>
        <authorList>
            <person name="Blattner F.R."/>
            <person name="Plunkett G. III"/>
            <person name="Bloch C.A."/>
            <person name="Perna N.T."/>
            <person name="Burland V."/>
            <person name="Riley M."/>
            <person name="Collado-Vides J."/>
            <person name="Glasner J.D."/>
            <person name="Rode C.K."/>
            <person name="Mayhew G.F."/>
            <person name="Gregor J."/>
            <person name="Davis N.W."/>
            <person name="Kirkpatrick H.A."/>
            <person name="Goeden M.A."/>
            <person name="Rose D.J."/>
            <person name="Mau B."/>
            <person name="Shao Y."/>
        </authorList>
    </citation>
    <scope>NUCLEOTIDE SEQUENCE [LARGE SCALE GENOMIC DNA]</scope>
    <source>
        <strain>K12 / MG1655 / ATCC 47076</strain>
    </source>
</reference>
<reference key="5">
    <citation type="journal article" date="2006" name="Mol. Syst. Biol.">
        <title>Highly accurate genome sequences of Escherichia coli K-12 strains MG1655 and W3110.</title>
        <authorList>
            <person name="Hayashi K."/>
            <person name="Morooka N."/>
            <person name="Yamamoto Y."/>
            <person name="Fujita K."/>
            <person name="Isono K."/>
            <person name="Choi S."/>
            <person name="Ohtsubo E."/>
            <person name="Baba T."/>
            <person name="Wanner B.L."/>
            <person name="Mori H."/>
            <person name="Horiuchi T."/>
        </authorList>
    </citation>
    <scope>NUCLEOTIDE SEQUENCE [LARGE SCALE GENOMIC DNA]</scope>
    <source>
        <strain>K12 / W3110 / ATCC 27325 / DSM 5911</strain>
    </source>
</reference>
<reference key="6">
    <citation type="journal article" date="1995" name="Mol. Microbiol.">
        <title>Binding of the TorR regulator to cis-acting direct repeats activates tor operon expression.</title>
        <authorList>
            <person name="Simon G."/>
            <person name="Jourlin C."/>
            <person name="Ansaldi M."/>
            <person name="Pascal M.-C."/>
            <person name="Chippaux M."/>
            <person name="Mejean V."/>
        </authorList>
    </citation>
    <scope>CHARACTERIZATION</scope>
    <source>
        <strain>K12 / MC4100 / ATCC 35695 / DSM 6574</strain>
    </source>
</reference>
<reference key="7">
    <citation type="journal article" date="1997" name="J. Mol. Biol.">
        <title>Transphosphorylation of the TorR response regulator requires the three phosphorylation sites of the TorS unorthodox sensor in Escherichia coli.</title>
        <authorList>
            <person name="Jourlin C."/>
            <person name="Ansaldi M."/>
            <person name="Mejean V."/>
        </authorList>
    </citation>
    <scope>MUTAGENESIS OF ASP-53</scope>
</reference>
<reference key="8">
    <citation type="journal article" date="2000" name="J. Bacteriol.">
        <title>The TorR high-affinity binding site plays a key role in both torR autoregulation and torCAD operon expression in Escherichia coli.</title>
        <authorList>
            <person name="Ansaldi M."/>
            <person name="Simon G."/>
            <person name="Lepelletier M."/>
            <person name="Mejean V."/>
        </authorList>
    </citation>
    <scope>CHARACTERIZATION</scope>
    <source>
        <strain>K12 / MC4100 / ATCC 35695 / DSM 6574</strain>
    </source>
</reference>
<reference key="9">
    <citation type="journal article" date="2004" name="Proc. Natl. Acad. Sci. U.S.A.">
        <title>TorI, a response regulator inhibitor of phage origin in Escherichia coli.</title>
        <authorList>
            <person name="Ansaldi M."/>
            <person name="Theraulaz L."/>
            <person name="Mejean V."/>
        </authorList>
    </citation>
    <scope>INTERACTION WITH TORI</scope>
</reference>
<protein>
    <recommendedName>
        <fullName>TorCAD operon transcriptional regulatory protein TorR</fullName>
    </recommendedName>
</protein>
<gene>
    <name type="primary">torR</name>
    <name type="ordered locus">b0995</name>
    <name type="ordered locus">JW0980</name>
</gene>
<sequence length="230" mass="26233">MPHHIVIVEDEPVTQARLQSYFTQEGYTVSVTASGAGLREIMQNQSVDLILLDINLPDENGLMLTRALRERSTVGIILVTGRSDRIDRIVGLEMGADDYVTKPLELRELVVRVKNLLWRIDLARQAQPHTQDNCYRFAGYCLNVSRHTLERDGEPIKLTRAEYEMLVAFVTNPGEILSRERLLRMLSARRVENPDLRTVDVLIRRLRHKLSADLLVTQHGEGYFLAADVC</sequence>